<protein>
    <recommendedName>
        <fullName evidence="1">Protein NrdI</fullName>
    </recommendedName>
</protein>
<organism>
    <name type="scientific">Escherichia coli O6:K15:H31 (strain 536 / UPEC)</name>
    <dbReference type="NCBI Taxonomy" id="362663"/>
    <lineage>
        <taxon>Bacteria</taxon>
        <taxon>Pseudomonadati</taxon>
        <taxon>Pseudomonadota</taxon>
        <taxon>Gammaproteobacteria</taxon>
        <taxon>Enterobacterales</taxon>
        <taxon>Enterobacteriaceae</taxon>
        <taxon>Escherichia</taxon>
    </lineage>
</organism>
<proteinExistence type="inferred from homology"/>
<reference key="1">
    <citation type="journal article" date="2006" name="Mol. Microbiol.">
        <title>Role of pathogenicity island-associated integrases in the genome plasticity of uropathogenic Escherichia coli strain 536.</title>
        <authorList>
            <person name="Hochhut B."/>
            <person name="Wilde C."/>
            <person name="Balling G."/>
            <person name="Middendorf B."/>
            <person name="Dobrindt U."/>
            <person name="Brzuszkiewicz E."/>
            <person name="Gottschalk G."/>
            <person name="Carniel E."/>
            <person name="Hacker J."/>
        </authorList>
    </citation>
    <scope>NUCLEOTIDE SEQUENCE [LARGE SCALE GENOMIC DNA]</scope>
    <source>
        <strain>536 / UPEC</strain>
    </source>
</reference>
<feature type="chain" id="PRO_1000016500" description="Protein NrdI">
    <location>
        <begin position="1"/>
        <end position="136"/>
    </location>
</feature>
<accession>Q0TEK1</accession>
<dbReference type="EMBL" id="CP000247">
    <property type="protein sequence ID" value="ABG70628.1"/>
    <property type="molecule type" value="Genomic_DNA"/>
</dbReference>
<dbReference type="RefSeq" id="WP_000080947.1">
    <property type="nucleotide sequence ID" value="NC_008253.1"/>
</dbReference>
<dbReference type="SMR" id="Q0TEK1"/>
<dbReference type="GeneID" id="75172757"/>
<dbReference type="KEGG" id="ecp:ECP_2639"/>
<dbReference type="HOGENOM" id="CLU_114845_0_0_6"/>
<dbReference type="Proteomes" id="UP000009182">
    <property type="component" value="Chromosome"/>
</dbReference>
<dbReference type="GO" id="GO:0010181">
    <property type="term" value="F:FMN binding"/>
    <property type="evidence" value="ECO:0007669"/>
    <property type="project" value="InterPro"/>
</dbReference>
<dbReference type="GO" id="GO:0036211">
    <property type="term" value="P:protein modification process"/>
    <property type="evidence" value="ECO:0007669"/>
    <property type="project" value="InterPro"/>
</dbReference>
<dbReference type="FunFam" id="3.40.50.360:FF:000005">
    <property type="entry name" value="Protein NrdI"/>
    <property type="match status" value="1"/>
</dbReference>
<dbReference type="Gene3D" id="3.40.50.360">
    <property type="match status" value="1"/>
</dbReference>
<dbReference type="HAMAP" id="MF_00128">
    <property type="entry name" value="NrdI"/>
    <property type="match status" value="1"/>
</dbReference>
<dbReference type="InterPro" id="IPR029039">
    <property type="entry name" value="Flavoprotein-like_sf"/>
</dbReference>
<dbReference type="InterPro" id="IPR020852">
    <property type="entry name" value="RNR_Ib_NrdI_bac"/>
</dbReference>
<dbReference type="InterPro" id="IPR004465">
    <property type="entry name" value="RNR_NrdI"/>
</dbReference>
<dbReference type="NCBIfam" id="TIGR00333">
    <property type="entry name" value="nrdI"/>
    <property type="match status" value="1"/>
</dbReference>
<dbReference type="PANTHER" id="PTHR37297">
    <property type="entry name" value="PROTEIN NRDI"/>
    <property type="match status" value="1"/>
</dbReference>
<dbReference type="PANTHER" id="PTHR37297:SF1">
    <property type="entry name" value="PROTEIN NRDI"/>
    <property type="match status" value="1"/>
</dbReference>
<dbReference type="Pfam" id="PF07972">
    <property type="entry name" value="Flavodoxin_NdrI"/>
    <property type="match status" value="1"/>
</dbReference>
<dbReference type="PIRSF" id="PIRSF005087">
    <property type="entry name" value="NrdI"/>
    <property type="match status" value="1"/>
</dbReference>
<dbReference type="SUPFAM" id="SSF52218">
    <property type="entry name" value="Flavoproteins"/>
    <property type="match status" value="1"/>
</dbReference>
<comment type="function">
    <text evidence="1">Probably involved in ribonucleotide reductase function.</text>
</comment>
<comment type="similarity">
    <text evidence="1">Belongs to the NrdI family.</text>
</comment>
<gene>
    <name evidence="1" type="primary">nrdI</name>
    <name type="ordered locus">ECP_2639</name>
</gene>
<evidence type="ECO:0000255" key="1">
    <source>
        <dbReference type="HAMAP-Rule" id="MF_00128"/>
    </source>
</evidence>
<name>NRDI_ECOL5</name>
<sequence length="136" mass="15340">MSQLVYFSSSSENTQRFIERLGLPAVRIPLNERERIQVDEPYILIVPSYGGGGTAGAVPRQVIRFLNDEHNRALLRGVIASGNRNFGEAYGRAGDVIARKCGVPWLYRFELMGTQSDIENVRKGVTEFWQRQPQNA</sequence>